<comment type="function">
    <text evidence="1">Component of the autophagy machinery that controls the major intracellular degradation process by which cytoplasmic materials are packaged into autophagosomes and delivered to lysosomes for degradation (By similarity). Binds phosphatidylinositol 3-phosphate (PtdIns3P) (By similarity).</text>
</comment>
<comment type="subcellular location">
    <subcellularLocation>
        <location evidence="1">Preautophagosomal structure</location>
    </subcellularLocation>
</comment>
<comment type="domain">
    <text evidence="2">The L/FRRG motif is required for recruitment to PtdIns3P.</text>
</comment>
<comment type="similarity">
    <text evidence="3">Belongs to the WD repeat PROPPIN family.</text>
</comment>
<feature type="chain" id="PRO_0000051455" description="WD repeat domain phosphoinositide-interacting protein 4">
    <location>
        <begin position="1"/>
        <end position="358"/>
    </location>
</feature>
<feature type="repeat" description="WD 1">
    <location>
        <begin position="2"/>
        <end position="40"/>
    </location>
</feature>
<feature type="repeat" description="WD 2">
    <location>
        <begin position="188"/>
        <end position="228"/>
    </location>
</feature>
<feature type="repeat" description="WD 3">
    <location>
        <begin position="233"/>
        <end position="272"/>
    </location>
</feature>
<feature type="short sequence motif" description="L/FRRG motif" evidence="2">
    <location>
        <begin position="229"/>
        <end position="232"/>
    </location>
</feature>
<feature type="sequence conflict" description="In Ref. 1; AAQ97800." evidence="3" ref="1">
    <original>V</original>
    <variation>A</variation>
    <location>
        <position position="131"/>
    </location>
</feature>
<feature type="sequence conflict" description="In Ref. 1; AAQ97800." evidence="3" ref="1">
    <original>S</original>
    <variation>F</variation>
    <location>
        <position position="180"/>
    </location>
</feature>
<feature type="sequence conflict" description="In Ref. 2; AAH66700." evidence="3" ref="2">
    <original>A</original>
    <variation>E</variation>
    <location>
        <position position="197"/>
    </location>
</feature>
<name>WIPI4_DANRE</name>
<protein>
    <recommendedName>
        <fullName>WD repeat domain phosphoinositide-interacting protein 4</fullName>
        <shortName>WIPI-4</shortName>
    </recommendedName>
    <alternativeName>
        <fullName>WD repeat-containing protein 45</fullName>
    </alternativeName>
</protein>
<sequence>MAQQRGVNSLQFNQDQSCFCCAMETGVRIYNVEPLMEKGHLDHEQVGSIALCSMLHRSNLLAVVGGGVNPKFSEISVLIWDDAREVRDPKDKLVLEFTFTKPVLAVRMRHDKIIIILKNRIYVYSFPDNPVKLFEFDTRDNPKGLCDLCPSLEKQLLVFPGHKCGSLQLVDLSNTKPGTSSAPFTINAHQSEIACLALNQPGSVVASASRKGTLIRLFDTTTRDKLVELRRGTDPATLYCINFSHDSSFLCASSDKGTVHIFALKDTKLNRRSALARVGKVGPVIGQYVDSQWSLANFTVPAECACICAFGKNTSKNVNSVIAICVDGTFHKYVFTPDGNCNREAFDVYLDICDDDDF</sequence>
<evidence type="ECO:0000250" key="1">
    <source>
        <dbReference type="UniProtKB" id="Q9Y484"/>
    </source>
</evidence>
<evidence type="ECO:0000250" key="2">
    <source>
        <dbReference type="UniProtKB" id="Q9Y4P8"/>
    </source>
</evidence>
<evidence type="ECO:0000305" key="3"/>
<gene>
    <name type="primary">wdr45</name>
    <name type="synonym">wipi4</name>
</gene>
<proteinExistence type="evidence at transcript level"/>
<dbReference type="EMBL" id="AY398367">
    <property type="protein sequence ID" value="AAQ97800.1"/>
    <property type="molecule type" value="mRNA"/>
</dbReference>
<dbReference type="EMBL" id="BC046090">
    <property type="protein sequence ID" value="AAH46090.1"/>
    <property type="molecule type" value="mRNA"/>
</dbReference>
<dbReference type="EMBL" id="BC066700">
    <property type="protein sequence ID" value="AAH66700.1"/>
    <property type="molecule type" value="mRNA"/>
</dbReference>
<dbReference type="RefSeq" id="NP_956525.1">
    <property type="nucleotide sequence ID" value="NM_200231.1"/>
</dbReference>
<dbReference type="RefSeq" id="XP_005169291.1">
    <property type="nucleotide sequence ID" value="XM_005169234.3"/>
</dbReference>
<dbReference type="SMR" id="Q7ZUX3"/>
<dbReference type="FunCoup" id="Q7ZUX3">
    <property type="interactions" value="967"/>
</dbReference>
<dbReference type="STRING" id="7955.ENSDARP00000149996"/>
<dbReference type="PaxDb" id="7955-ENSDARP00000108156"/>
<dbReference type="GeneID" id="393200"/>
<dbReference type="KEGG" id="dre:393200"/>
<dbReference type="AGR" id="ZFIN:ZDB-GENE-040426-990"/>
<dbReference type="CTD" id="11152"/>
<dbReference type="ZFIN" id="ZDB-GENE-040426-990">
    <property type="gene designation" value="wdr45"/>
</dbReference>
<dbReference type="eggNOG" id="KOG2111">
    <property type="taxonomic scope" value="Eukaryota"/>
</dbReference>
<dbReference type="InParanoid" id="Q7ZUX3"/>
<dbReference type="OrthoDB" id="1667587at2759"/>
<dbReference type="PhylomeDB" id="Q7ZUX3"/>
<dbReference type="TreeFam" id="TF314859"/>
<dbReference type="Reactome" id="R-DRE-1632852">
    <property type="pathway name" value="Macroautophagy"/>
</dbReference>
<dbReference type="PRO" id="PR:Q7ZUX3"/>
<dbReference type="Proteomes" id="UP000000437">
    <property type="component" value="Chromosome 10"/>
</dbReference>
<dbReference type="GO" id="GO:0005829">
    <property type="term" value="C:cytosol"/>
    <property type="evidence" value="ECO:0000318"/>
    <property type="project" value="GO_Central"/>
</dbReference>
<dbReference type="GO" id="GO:0000407">
    <property type="term" value="C:phagophore assembly site"/>
    <property type="evidence" value="ECO:0000250"/>
    <property type="project" value="UniProtKB"/>
</dbReference>
<dbReference type="GO" id="GO:0034045">
    <property type="term" value="C:phagophore assembly site membrane"/>
    <property type="evidence" value="ECO:0000318"/>
    <property type="project" value="GO_Central"/>
</dbReference>
<dbReference type="GO" id="GO:1901981">
    <property type="term" value="F:phosphatidylinositol phosphate binding"/>
    <property type="evidence" value="ECO:0000250"/>
    <property type="project" value="UniProtKB"/>
</dbReference>
<dbReference type="GO" id="GO:0080025">
    <property type="term" value="F:phosphatidylinositol-3,5-bisphosphate binding"/>
    <property type="evidence" value="ECO:0000318"/>
    <property type="project" value="GO_Central"/>
</dbReference>
<dbReference type="GO" id="GO:0032266">
    <property type="term" value="F:phosphatidylinositol-3-phosphate binding"/>
    <property type="evidence" value="ECO:0000250"/>
    <property type="project" value="UniProtKB"/>
</dbReference>
<dbReference type="GO" id="GO:0030674">
    <property type="term" value="F:protein-macromolecule adaptor activity"/>
    <property type="evidence" value="ECO:0000318"/>
    <property type="project" value="GO_Central"/>
</dbReference>
<dbReference type="GO" id="GO:0000045">
    <property type="term" value="P:autophagosome assembly"/>
    <property type="evidence" value="ECO:0000250"/>
    <property type="project" value="UniProtKB"/>
</dbReference>
<dbReference type="GO" id="GO:0000422">
    <property type="term" value="P:autophagy of mitochondrion"/>
    <property type="evidence" value="ECO:0000318"/>
    <property type="project" value="GO_Central"/>
</dbReference>
<dbReference type="GO" id="GO:0009267">
    <property type="term" value="P:cellular response to starvation"/>
    <property type="evidence" value="ECO:0000250"/>
    <property type="project" value="UniProtKB"/>
</dbReference>
<dbReference type="GO" id="GO:0061723">
    <property type="term" value="P:glycophagy"/>
    <property type="evidence" value="ECO:0000318"/>
    <property type="project" value="GO_Central"/>
</dbReference>
<dbReference type="GO" id="GO:0044804">
    <property type="term" value="P:nucleophagy"/>
    <property type="evidence" value="ECO:0000318"/>
    <property type="project" value="GO_Central"/>
</dbReference>
<dbReference type="GO" id="GO:0000425">
    <property type="term" value="P:pexophagy"/>
    <property type="evidence" value="ECO:0000318"/>
    <property type="project" value="GO_Central"/>
</dbReference>
<dbReference type="GO" id="GO:2000786">
    <property type="term" value="P:positive regulation of autophagosome assembly"/>
    <property type="evidence" value="ECO:0000250"/>
    <property type="project" value="UniProtKB"/>
</dbReference>
<dbReference type="GO" id="GO:0034497">
    <property type="term" value="P:protein localization to phagophore assembly site"/>
    <property type="evidence" value="ECO:0000318"/>
    <property type="project" value="GO_Central"/>
</dbReference>
<dbReference type="FunFam" id="2.130.10.10:FF:000154">
    <property type="entry name" value="WD repeat domain phosphoinositide-interacting protein 4"/>
    <property type="match status" value="1"/>
</dbReference>
<dbReference type="Gene3D" id="2.130.10.10">
    <property type="entry name" value="YVTN repeat-like/Quinoprotein amine dehydrogenase"/>
    <property type="match status" value="1"/>
</dbReference>
<dbReference type="InterPro" id="IPR048720">
    <property type="entry name" value="PROPPIN"/>
</dbReference>
<dbReference type="InterPro" id="IPR015943">
    <property type="entry name" value="WD40/YVTN_repeat-like_dom_sf"/>
</dbReference>
<dbReference type="InterPro" id="IPR036322">
    <property type="entry name" value="WD40_repeat_dom_sf"/>
</dbReference>
<dbReference type="InterPro" id="IPR001680">
    <property type="entry name" value="WD40_rpt"/>
</dbReference>
<dbReference type="PANTHER" id="PTHR11227">
    <property type="entry name" value="WD-REPEAT PROTEIN INTERACTING WITH PHOSPHOINOSIDES WIPI -RELATED"/>
    <property type="match status" value="1"/>
</dbReference>
<dbReference type="Pfam" id="PF21032">
    <property type="entry name" value="PROPPIN"/>
    <property type="match status" value="1"/>
</dbReference>
<dbReference type="SMART" id="SM00320">
    <property type="entry name" value="WD40"/>
    <property type="match status" value="2"/>
</dbReference>
<dbReference type="SUPFAM" id="SSF50978">
    <property type="entry name" value="WD40 repeat-like"/>
    <property type="match status" value="1"/>
</dbReference>
<accession>Q7ZUX3</accession>
<accession>Q6NY84</accession>
<accession>Q6TGY9</accession>
<organism>
    <name type="scientific">Danio rerio</name>
    <name type="common">Zebrafish</name>
    <name type="synonym">Brachydanio rerio</name>
    <dbReference type="NCBI Taxonomy" id="7955"/>
    <lineage>
        <taxon>Eukaryota</taxon>
        <taxon>Metazoa</taxon>
        <taxon>Chordata</taxon>
        <taxon>Craniata</taxon>
        <taxon>Vertebrata</taxon>
        <taxon>Euteleostomi</taxon>
        <taxon>Actinopterygii</taxon>
        <taxon>Neopterygii</taxon>
        <taxon>Teleostei</taxon>
        <taxon>Ostariophysi</taxon>
        <taxon>Cypriniformes</taxon>
        <taxon>Danionidae</taxon>
        <taxon>Danioninae</taxon>
        <taxon>Danio</taxon>
    </lineage>
</organism>
<keyword id="KW-0072">Autophagy</keyword>
<keyword id="KW-0446">Lipid-binding</keyword>
<keyword id="KW-1185">Reference proteome</keyword>
<keyword id="KW-0677">Repeat</keyword>
<keyword id="KW-0853">WD repeat</keyword>
<reference key="1">
    <citation type="journal article" date="2004" name="Proc. Natl. Acad. Sci. U.S.A.">
        <title>Hematopoietic gene expression profile in zebrafish kidney marrow.</title>
        <authorList>
            <person name="Song H.-D."/>
            <person name="Sun X.-J."/>
            <person name="Deng M."/>
            <person name="Zhang G.-W."/>
            <person name="Zhou Y."/>
            <person name="Wu X.-Y."/>
            <person name="Sheng Y."/>
            <person name="Chen Y."/>
            <person name="Ruan Z."/>
            <person name="Jiang C.-L."/>
            <person name="Fan H.-Y."/>
            <person name="Zon L.I."/>
            <person name="Kanki J.P."/>
            <person name="Liu T.X."/>
            <person name="Look A.T."/>
            <person name="Chen Z."/>
        </authorList>
    </citation>
    <scope>NUCLEOTIDE SEQUENCE [LARGE SCALE MRNA]</scope>
    <source>
        <tissue>Kidney marrow</tissue>
    </source>
</reference>
<reference key="2">
    <citation type="submission" date="2003-01" db="EMBL/GenBank/DDBJ databases">
        <authorList>
            <consortium name="NIH - Zebrafish Gene Collection (ZGC) project"/>
        </authorList>
    </citation>
    <scope>NUCLEOTIDE SEQUENCE [LARGE SCALE MRNA]</scope>
    <source>
        <tissue>Embryo</tissue>
        <tissue>Kidney</tissue>
    </source>
</reference>